<gene>
    <name evidence="1" type="primary">argS</name>
    <name type="ordered locus">SPT_2089</name>
</gene>
<reference key="1">
    <citation type="journal article" date="2010" name="Genome Biol.">
        <title>Structure and dynamics of the pan-genome of Streptococcus pneumoniae and closely related species.</title>
        <authorList>
            <person name="Donati C."/>
            <person name="Hiller N.L."/>
            <person name="Tettelin H."/>
            <person name="Muzzi A."/>
            <person name="Croucher N.J."/>
            <person name="Angiuoli S.V."/>
            <person name="Oggioni M."/>
            <person name="Dunning Hotopp J.C."/>
            <person name="Hu F.Z."/>
            <person name="Riley D.R."/>
            <person name="Covacci A."/>
            <person name="Mitchell T.J."/>
            <person name="Bentley S.D."/>
            <person name="Kilian M."/>
            <person name="Ehrlich G.D."/>
            <person name="Rappuoli R."/>
            <person name="Moxon E.R."/>
            <person name="Masignani V."/>
        </authorList>
    </citation>
    <scope>NUCLEOTIDE SEQUENCE [LARGE SCALE GENOMIC DNA]</scope>
    <source>
        <strain>Taiwan19F-14</strain>
    </source>
</reference>
<name>SYR_STRZT</name>
<sequence length="563" mass="63456">MNTKELIASELASIIDSLDQEAILKLLETPKNSEMGDIAFPAFSLAKVERKAPQMIAAELAEKMNSQAFEKVVATGPYVNFFLDKSAISAQVLQAVTTEKEHYADQNIGKQENVVIDMSSPNIAKPFSIGHLRSTVIGDSLSHIFQKIGYQTVKVNHLGDWGKQFGMLIVAYKKWGDEEAVKAHPIDELLKLYVRINAEAENDPSLDEEAREWFRKLENGDEEALALWQWFRDESLVEFNRLYNELKVEFDSYNGEAFYNDKMDAVVDILSEKGLLLESEGAQVVNLEKYGIEHPALIKKSDGATLYITRDLAAALYRKNEYQFAKSIYVVGQEQSAHFKQLKAVLQEMGYDWSDDITHVPFGLVTKEGKKLSTRKGNVILLEPTVAEAVSRAKVQIEAKNPELENKDQVAHAVGIGAIKFYDLKTDRTNGYDFDLEAMVSFEGETGPYVQYAYARIQSILRKADFKPETAGNYSLNDTESWEIIKLIQDFPRIINRAADNFEPSIIAKFAISLAQSFNKYYAHTRILDESPERDSRLALSYATAVVLKEALRLLGVEAPEKM</sequence>
<protein>
    <recommendedName>
        <fullName evidence="1">Arginine--tRNA ligase</fullName>
        <ecNumber evidence="1">6.1.1.19</ecNumber>
    </recommendedName>
    <alternativeName>
        <fullName evidence="1">Arginyl-tRNA synthetase</fullName>
        <shortName evidence="1">ArgRS</shortName>
    </alternativeName>
</protein>
<comment type="catalytic activity">
    <reaction evidence="1">
        <text>tRNA(Arg) + L-arginine + ATP = L-arginyl-tRNA(Arg) + AMP + diphosphate</text>
        <dbReference type="Rhea" id="RHEA:20301"/>
        <dbReference type="Rhea" id="RHEA-COMP:9658"/>
        <dbReference type="Rhea" id="RHEA-COMP:9673"/>
        <dbReference type="ChEBI" id="CHEBI:30616"/>
        <dbReference type="ChEBI" id="CHEBI:32682"/>
        <dbReference type="ChEBI" id="CHEBI:33019"/>
        <dbReference type="ChEBI" id="CHEBI:78442"/>
        <dbReference type="ChEBI" id="CHEBI:78513"/>
        <dbReference type="ChEBI" id="CHEBI:456215"/>
        <dbReference type="EC" id="6.1.1.19"/>
    </reaction>
</comment>
<comment type="subunit">
    <text evidence="1">Monomer.</text>
</comment>
<comment type="subcellular location">
    <subcellularLocation>
        <location evidence="1">Cytoplasm</location>
    </subcellularLocation>
</comment>
<comment type="similarity">
    <text evidence="1">Belongs to the class-I aminoacyl-tRNA synthetase family.</text>
</comment>
<feature type="chain" id="PRO_1000198938" description="Arginine--tRNA ligase">
    <location>
        <begin position="1"/>
        <end position="563"/>
    </location>
</feature>
<feature type="short sequence motif" description="'HIGH' region">
    <location>
        <begin position="121"/>
        <end position="131"/>
    </location>
</feature>
<accession>C1CTY4</accession>
<dbReference type="EC" id="6.1.1.19" evidence="1"/>
<dbReference type="EMBL" id="CP000921">
    <property type="protein sequence ID" value="ACO23786.1"/>
    <property type="molecule type" value="Genomic_DNA"/>
</dbReference>
<dbReference type="RefSeq" id="WP_001092700.1">
    <property type="nucleotide sequence ID" value="NC_012469.1"/>
</dbReference>
<dbReference type="SMR" id="C1CTY4"/>
<dbReference type="KEGG" id="snt:SPT_2089"/>
<dbReference type="HOGENOM" id="CLU_006406_6_1_9"/>
<dbReference type="GO" id="GO:0005737">
    <property type="term" value="C:cytoplasm"/>
    <property type="evidence" value="ECO:0007669"/>
    <property type="project" value="UniProtKB-SubCell"/>
</dbReference>
<dbReference type="GO" id="GO:0004814">
    <property type="term" value="F:arginine-tRNA ligase activity"/>
    <property type="evidence" value="ECO:0007669"/>
    <property type="project" value="UniProtKB-UniRule"/>
</dbReference>
<dbReference type="GO" id="GO:0005524">
    <property type="term" value="F:ATP binding"/>
    <property type="evidence" value="ECO:0007669"/>
    <property type="project" value="UniProtKB-UniRule"/>
</dbReference>
<dbReference type="GO" id="GO:0006420">
    <property type="term" value="P:arginyl-tRNA aminoacylation"/>
    <property type="evidence" value="ECO:0007669"/>
    <property type="project" value="UniProtKB-UniRule"/>
</dbReference>
<dbReference type="CDD" id="cd07956">
    <property type="entry name" value="Anticodon_Ia_Arg"/>
    <property type="match status" value="1"/>
</dbReference>
<dbReference type="CDD" id="cd00671">
    <property type="entry name" value="ArgRS_core"/>
    <property type="match status" value="1"/>
</dbReference>
<dbReference type="FunFam" id="1.10.730.10:FF:000034">
    <property type="entry name" value="Arginine--tRNA ligase"/>
    <property type="match status" value="1"/>
</dbReference>
<dbReference type="FunFam" id="3.30.1360.70:FF:000005">
    <property type="entry name" value="Arginine--tRNA ligase"/>
    <property type="match status" value="1"/>
</dbReference>
<dbReference type="FunFam" id="3.40.50.620:FF:000116">
    <property type="entry name" value="Arginine--tRNA ligase"/>
    <property type="match status" value="1"/>
</dbReference>
<dbReference type="Gene3D" id="3.30.1360.70">
    <property type="entry name" value="Arginyl tRNA synthetase N-terminal domain"/>
    <property type="match status" value="1"/>
</dbReference>
<dbReference type="Gene3D" id="3.40.50.620">
    <property type="entry name" value="HUPs"/>
    <property type="match status" value="1"/>
</dbReference>
<dbReference type="Gene3D" id="1.10.730.10">
    <property type="entry name" value="Isoleucyl-tRNA Synthetase, Domain 1"/>
    <property type="match status" value="1"/>
</dbReference>
<dbReference type="HAMAP" id="MF_00123">
    <property type="entry name" value="Arg_tRNA_synth"/>
    <property type="match status" value="1"/>
</dbReference>
<dbReference type="InterPro" id="IPR001278">
    <property type="entry name" value="Arg-tRNA-ligase"/>
</dbReference>
<dbReference type="InterPro" id="IPR005148">
    <property type="entry name" value="Arg-tRNA-synth_N"/>
</dbReference>
<dbReference type="InterPro" id="IPR036695">
    <property type="entry name" value="Arg-tRNA-synth_N_sf"/>
</dbReference>
<dbReference type="InterPro" id="IPR035684">
    <property type="entry name" value="ArgRS_core"/>
</dbReference>
<dbReference type="InterPro" id="IPR008909">
    <property type="entry name" value="DALR_anticod-bd"/>
</dbReference>
<dbReference type="InterPro" id="IPR014729">
    <property type="entry name" value="Rossmann-like_a/b/a_fold"/>
</dbReference>
<dbReference type="InterPro" id="IPR009080">
    <property type="entry name" value="tRNAsynth_Ia_anticodon-bd"/>
</dbReference>
<dbReference type="NCBIfam" id="TIGR00456">
    <property type="entry name" value="argS"/>
    <property type="match status" value="1"/>
</dbReference>
<dbReference type="PANTHER" id="PTHR11956:SF5">
    <property type="entry name" value="ARGININE--TRNA LIGASE, CYTOPLASMIC"/>
    <property type="match status" value="1"/>
</dbReference>
<dbReference type="PANTHER" id="PTHR11956">
    <property type="entry name" value="ARGINYL-TRNA SYNTHETASE"/>
    <property type="match status" value="1"/>
</dbReference>
<dbReference type="Pfam" id="PF03485">
    <property type="entry name" value="Arg_tRNA_synt_N"/>
    <property type="match status" value="1"/>
</dbReference>
<dbReference type="Pfam" id="PF05746">
    <property type="entry name" value="DALR_1"/>
    <property type="match status" value="1"/>
</dbReference>
<dbReference type="Pfam" id="PF00750">
    <property type="entry name" value="tRNA-synt_1d"/>
    <property type="match status" value="1"/>
</dbReference>
<dbReference type="PRINTS" id="PR01038">
    <property type="entry name" value="TRNASYNTHARG"/>
</dbReference>
<dbReference type="SMART" id="SM01016">
    <property type="entry name" value="Arg_tRNA_synt_N"/>
    <property type="match status" value="1"/>
</dbReference>
<dbReference type="SMART" id="SM00836">
    <property type="entry name" value="DALR_1"/>
    <property type="match status" value="1"/>
</dbReference>
<dbReference type="SUPFAM" id="SSF47323">
    <property type="entry name" value="Anticodon-binding domain of a subclass of class I aminoacyl-tRNA synthetases"/>
    <property type="match status" value="1"/>
</dbReference>
<dbReference type="SUPFAM" id="SSF55190">
    <property type="entry name" value="Arginyl-tRNA synthetase (ArgRS), N-terminal 'additional' domain"/>
    <property type="match status" value="1"/>
</dbReference>
<dbReference type="SUPFAM" id="SSF52374">
    <property type="entry name" value="Nucleotidylyl transferase"/>
    <property type="match status" value="1"/>
</dbReference>
<evidence type="ECO:0000255" key="1">
    <source>
        <dbReference type="HAMAP-Rule" id="MF_00123"/>
    </source>
</evidence>
<keyword id="KW-0030">Aminoacyl-tRNA synthetase</keyword>
<keyword id="KW-0067">ATP-binding</keyword>
<keyword id="KW-0963">Cytoplasm</keyword>
<keyword id="KW-0436">Ligase</keyword>
<keyword id="KW-0547">Nucleotide-binding</keyword>
<keyword id="KW-0648">Protein biosynthesis</keyword>
<proteinExistence type="inferred from homology"/>
<organism>
    <name type="scientific">Streptococcus pneumoniae (strain Taiwan19F-14)</name>
    <dbReference type="NCBI Taxonomy" id="487213"/>
    <lineage>
        <taxon>Bacteria</taxon>
        <taxon>Bacillati</taxon>
        <taxon>Bacillota</taxon>
        <taxon>Bacilli</taxon>
        <taxon>Lactobacillales</taxon>
        <taxon>Streptococcaceae</taxon>
        <taxon>Streptococcus</taxon>
    </lineage>
</organism>